<reference key="1">
    <citation type="submission" date="1997-12" db="EMBL/GenBank/DDBJ databases">
        <title>Putative phospholipase B precursor of Candida albicans.</title>
        <authorList>
            <person name="Theiss S."/>
            <person name="Koehler G.A."/>
        </authorList>
    </citation>
    <scope>NUCLEOTIDE SEQUENCE [GENOMIC DNA]</scope>
    <source>
        <strain>SS</strain>
    </source>
</reference>
<reference key="2">
    <citation type="submission" date="1998-11" db="EMBL/GenBank/DDBJ databases">
        <title>Candida albicans strain 1161 genome pilot sequencing project.</title>
        <authorList>
            <person name="Taylor K."/>
            <person name="Harris D."/>
            <person name="Barrell B.G."/>
            <person name="Rajandream M.A."/>
        </authorList>
    </citation>
    <scope>NUCLEOTIDE SEQUENCE [LARGE SCALE GENOMIC DNA]</scope>
    <source>
        <strain>1161</strain>
    </source>
</reference>
<protein>
    <recommendedName>
        <fullName>Lysophospholipase 3</fullName>
        <ecNumber>3.1.1.5</ecNumber>
    </recommendedName>
    <alternativeName>
        <fullName>Phospholipase B 3</fullName>
    </alternativeName>
</protein>
<proteinExistence type="inferred from homology"/>
<comment type="function">
    <text evidence="1">Catalyzes the release of fatty acids from lysophospholipids. Phospholipase B may well contribute to pathogenicity by abetting the fungus in damaging and traversing host cell membranes, processes which likely increase the rapidity of disseminated infection (By similarity).</text>
</comment>
<comment type="catalytic activity">
    <reaction>
        <text>a 1-acyl-sn-glycero-3-phosphocholine + H2O = sn-glycerol 3-phosphocholine + a fatty acid + H(+)</text>
        <dbReference type="Rhea" id="RHEA:15177"/>
        <dbReference type="ChEBI" id="CHEBI:15377"/>
        <dbReference type="ChEBI" id="CHEBI:15378"/>
        <dbReference type="ChEBI" id="CHEBI:16870"/>
        <dbReference type="ChEBI" id="CHEBI:28868"/>
        <dbReference type="ChEBI" id="CHEBI:58168"/>
        <dbReference type="EC" id="3.1.1.5"/>
    </reaction>
</comment>
<comment type="subcellular location">
    <subcellularLocation>
        <location evidence="5">Secreted</location>
    </subcellularLocation>
</comment>
<comment type="similarity">
    <text evidence="5">Belongs to the lysophospholipase family.</text>
</comment>
<dbReference type="EC" id="3.1.1.5"/>
<dbReference type="EMBL" id="AF038128">
    <property type="protein sequence ID" value="AAF08980.1"/>
    <property type="molecule type" value="Genomic_DNA"/>
</dbReference>
<dbReference type="EMBL" id="AL033501">
    <property type="protein sequence ID" value="CAA21996.1"/>
    <property type="molecule type" value="Genomic_DNA"/>
</dbReference>
<dbReference type="PIR" id="T18238">
    <property type="entry name" value="T18238"/>
</dbReference>
<dbReference type="SMR" id="Q9UVX1"/>
<dbReference type="GlyCosmos" id="Q9UVX1">
    <property type="glycosylation" value="16 sites, No reported glycans"/>
</dbReference>
<dbReference type="VEuPathDB" id="FungiDB:C1_08230C_A"/>
<dbReference type="VEuPathDB" id="FungiDB:CAWG_00600"/>
<dbReference type="GO" id="GO:0005829">
    <property type="term" value="C:cytosol"/>
    <property type="evidence" value="ECO:0007669"/>
    <property type="project" value="TreeGrafter"/>
</dbReference>
<dbReference type="GO" id="GO:0005783">
    <property type="term" value="C:endoplasmic reticulum"/>
    <property type="evidence" value="ECO:0007669"/>
    <property type="project" value="TreeGrafter"/>
</dbReference>
<dbReference type="GO" id="GO:0005576">
    <property type="term" value="C:extracellular region"/>
    <property type="evidence" value="ECO:0007669"/>
    <property type="project" value="UniProtKB-SubCell"/>
</dbReference>
<dbReference type="GO" id="GO:0005886">
    <property type="term" value="C:plasma membrane"/>
    <property type="evidence" value="ECO:0007669"/>
    <property type="project" value="TreeGrafter"/>
</dbReference>
<dbReference type="GO" id="GO:0004622">
    <property type="term" value="F:lysophospholipase activity"/>
    <property type="evidence" value="ECO:0007669"/>
    <property type="project" value="UniProtKB-EC"/>
</dbReference>
<dbReference type="GO" id="GO:0004623">
    <property type="term" value="F:phospholipase A2 activity"/>
    <property type="evidence" value="ECO:0007669"/>
    <property type="project" value="TreeGrafter"/>
</dbReference>
<dbReference type="GO" id="GO:0046475">
    <property type="term" value="P:glycerophospholipid catabolic process"/>
    <property type="evidence" value="ECO:0007669"/>
    <property type="project" value="TreeGrafter"/>
</dbReference>
<dbReference type="CDD" id="cd07203">
    <property type="entry name" value="cPLA2_Fungal_PLB"/>
    <property type="match status" value="1"/>
</dbReference>
<dbReference type="FunFam" id="3.40.1090.10:FF:000010">
    <property type="entry name" value="Lysophospholipase"/>
    <property type="match status" value="1"/>
</dbReference>
<dbReference type="Gene3D" id="3.40.1090.10">
    <property type="entry name" value="Cytosolic phospholipase A2 catalytic domain"/>
    <property type="match status" value="1"/>
</dbReference>
<dbReference type="InterPro" id="IPR016035">
    <property type="entry name" value="Acyl_Trfase/lysoPLipase"/>
</dbReference>
<dbReference type="InterPro" id="IPR002642">
    <property type="entry name" value="LysoPLipase_cat_dom"/>
</dbReference>
<dbReference type="PANTHER" id="PTHR10728">
    <property type="entry name" value="CYTOSOLIC PHOSPHOLIPASE A2"/>
    <property type="match status" value="1"/>
</dbReference>
<dbReference type="PANTHER" id="PTHR10728:SF33">
    <property type="entry name" value="LYSOPHOSPHOLIPASE 1-RELATED"/>
    <property type="match status" value="1"/>
</dbReference>
<dbReference type="Pfam" id="PF01735">
    <property type="entry name" value="PLA2_B"/>
    <property type="match status" value="1"/>
</dbReference>
<dbReference type="SMART" id="SM00022">
    <property type="entry name" value="PLAc"/>
    <property type="match status" value="1"/>
</dbReference>
<dbReference type="SUPFAM" id="SSF52151">
    <property type="entry name" value="FabD/lysophospholipase-like"/>
    <property type="match status" value="1"/>
</dbReference>
<dbReference type="PROSITE" id="PS51210">
    <property type="entry name" value="PLA2C"/>
    <property type="match status" value="1"/>
</dbReference>
<feature type="signal peptide" evidence="2">
    <location>
        <begin position="1"/>
        <end position="19"/>
    </location>
</feature>
<feature type="chain" id="PRO_0000024632" description="Lysophospholipase 3">
    <location>
        <begin position="20"/>
        <end position="754"/>
    </location>
</feature>
<feature type="domain" description="PLA2c" evidence="3">
    <location>
        <begin position="114"/>
        <end position="670"/>
    </location>
</feature>
<feature type="region of interest" description="Disordered" evidence="4">
    <location>
        <begin position="25"/>
        <end position="88"/>
    </location>
</feature>
<feature type="region of interest" description="Disordered" evidence="4">
    <location>
        <begin position="687"/>
        <end position="727"/>
    </location>
</feature>
<feature type="compositionally biased region" description="Low complexity" evidence="4">
    <location>
        <begin position="25"/>
        <end position="40"/>
    </location>
</feature>
<feature type="compositionally biased region" description="Low complexity" evidence="4">
    <location>
        <begin position="50"/>
        <end position="88"/>
    </location>
</feature>
<feature type="compositionally biased region" description="Low complexity" evidence="4">
    <location>
        <begin position="687"/>
        <end position="721"/>
    </location>
</feature>
<feature type="glycosylation site" description="N-linked (GlcNAc...) asparagine" evidence="2">
    <location>
        <position position="112"/>
    </location>
</feature>
<feature type="glycosylation site" description="N-linked (GlcNAc...) asparagine" evidence="2">
    <location>
        <position position="156"/>
    </location>
</feature>
<feature type="glycosylation site" description="N-linked (GlcNAc...) asparagine" evidence="2">
    <location>
        <position position="174"/>
    </location>
</feature>
<feature type="glycosylation site" description="N-linked (GlcNAc...) asparagine" evidence="2">
    <location>
        <position position="317"/>
    </location>
</feature>
<feature type="glycosylation site" description="N-linked (GlcNAc...) asparagine" evidence="2">
    <location>
        <position position="325"/>
    </location>
</feature>
<feature type="glycosylation site" description="N-linked (GlcNAc...) asparagine" evidence="2">
    <location>
        <position position="354"/>
    </location>
</feature>
<feature type="glycosylation site" description="N-linked (GlcNAc...) asparagine" evidence="2">
    <location>
        <position position="391"/>
    </location>
</feature>
<feature type="glycosylation site" description="N-linked (GlcNAc...) asparagine" evidence="2">
    <location>
        <position position="423"/>
    </location>
</feature>
<feature type="glycosylation site" description="N-linked (GlcNAc...) asparagine" evidence="2">
    <location>
        <position position="470"/>
    </location>
</feature>
<feature type="glycosylation site" description="N-linked (GlcNAc...) asparagine" evidence="2">
    <location>
        <position position="510"/>
    </location>
</feature>
<feature type="glycosylation site" description="N-linked (GlcNAc...) asparagine" evidence="2">
    <location>
        <position position="515"/>
    </location>
</feature>
<feature type="glycosylation site" description="N-linked (GlcNAc...) asparagine" evidence="2">
    <location>
        <position position="560"/>
    </location>
</feature>
<feature type="glycosylation site" description="N-linked (GlcNAc...) asparagine" evidence="2">
    <location>
        <position position="577"/>
    </location>
</feature>
<feature type="glycosylation site" description="N-linked (GlcNAc...) asparagine" evidence="2">
    <location>
        <position position="597"/>
    </location>
</feature>
<feature type="glycosylation site" description="N-linked (GlcNAc...) asparagine" evidence="2">
    <location>
        <position position="625"/>
    </location>
</feature>
<feature type="glycosylation site" description="N-linked (GlcNAc...) asparagine" evidence="2">
    <location>
        <position position="631"/>
    </location>
</feature>
<feature type="sequence conflict" description="In Ref. 1; AAF08980." evidence="5" ref="1">
    <original>N</original>
    <variation>D</variation>
    <location>
        <position position="377"/>
    </location>
</feature>
<feature type="sequence conflict" description="In Ref. 1; AAF08980." evidence="5" ref="1">
    <original>K</original>
    <variation>E</variation>
    <location>
        <position position="494"/>
    </location>
</feature>
<keyword id="KW-0325">Glycoprotein</keyword>
<keyword id="KW-0378">Hydrolase</keyword>
<keyword id="KW-0442">Lipid degradation</keyword>
<keyword id="KW-0443">Lipid metabolism</keyword>
<keyword id="KW-0964">Secreted</keyword>
<keyword id="KW-0732">Signal</keyword>
<name>PLB3_CANAX</name>
<evidence type="ECO:0000250" key="1"/>
<evidence type="ECO:0000255" key="2"/>
<evidence type="ECO:0000255" key="3">
    <source>
        <dbReference type="PROSITE-ProRule" id="PRU00555"/>
    </source>
</evidence>
<evidence type="ECO:0000256" key="4">
    <source>
        <dbReference type="SAM" id="MobiDB-lite"/>
    </source>
</evidence>
<evidence type="ECO:0000305" key="5"/>
<organism>
    <name type="scientific">Candida albicans</name>
    <name type="common">Yeast</name>
    <dbReference type="NCBI Taxonomy" id="5476"/>
    <lineage>
        <taxon>Eukaryota</taxon>
        <taxon>Fungi</taxon>
        <taxon>Dikarya</taxon>
        <taxon>Ascomycota</taxon>
        <taxon>Saccharomycotina</taxon>
        <taxon>Pichiomycetes</taxon>
        <taxon>Debaryomycetaceae</taxon>
        <taxon>Candida/Lodderomyces clade</taxon>
        <taxon>Candida</taxon>
    </lineage>
</organism>
<sequence>MKVNLKLIIGSILISQAQAIWPFDSSGSSSSSDSSPSETGSSGGTFPFDLFGSGSSLTQSSSAQASSTKSTSDSASSTDSSLFSSSNSGSSWYQTFLDGDSGDQKTDYAPFNLTCPSKKTFIRTASELSQQEKDYIHKRQETTNKNLIDFLSKRANLSDFDAKSFINDNAPNHNITIGLSFSGGGYRAMLAGAGQILGLDGRYEDANKHGLGGLLDSSTYVVGLSGGNWLVGSLALNDWLSVGDIVNGKSTIWQLQDSILNPSGMRIDKTIAYYYGLAQAVQAKEDAGFQTSVTDTWGRALSYQFFEEDDSGTGGANITWSSIRNLSSFQDHSMPYPIVVANGRTPGTYIINENSTIFEISPYELGSWDPSLKSFSNIQYLGSSVNNGNPNNTDICVNNFDNAGFIMGTSSSLFNQILLQLDNYSINSIIKMILEKVLTDVSDEEYDIAVYEPNPFFGADSAGIKSITTNDTLYLCDGGEDLQNVPFYPLIQNKRGVDVIFAFDNSADTNSSWPNGTSIQETYKRQFSKQGKGTPFPFAPDYKTFLDKNMGDKPVFFGCNSSDLEDLVAWHENDKINVTDVPLVVYTSNTRMSYNSNFSTFKLSYSDQEKFGAIRNGFETVTRNNLTDDENWSTCVGCAIIRRQQERLGEEQSDECKKCFQEYCWTGGFKDAASVSSVSGISGLAAKTHTSGGTSSTTQQTSTTTGSSANGGSSSTGSSSSSKKKNGGDLVNGGVPSSIFLVFNSLLGLIIAYL</sequence>
<accession>Q9UVX1</accession>
<accession>O94046</accession>
<gene>
    <name type="primary">PLB3</name>
    <name type="synonym">PLB1</name>
    <name type="ORF">Ca41C10.12</name>
</gene>